<proteinExistence type="evidence at protein level"/>
<feature type="propeptide" id="PRO_0000454306" evidence="3">
    <location>
        <begin position="1"/>
        <end position="50"/>
    </location>
</feature>
<feature type="peptide" id="PRO_0000454307" description="ComX pheromone" evidence="3">
    <location>
        <begin position="51"/>
        <end position="56"/>
    </location>
</feature>
<feature type="modified residue" description="Tryptophan derivative" evidence="3 4">
    <location>
        <position position="54"/>
    </location>
</feature>
<feature type="lipid moiety-binding region" description="3'-farnesyl-2',N2-cyclotryptophan" evidence="4 8">
    <location>
        <position position="54"/>
    </location>
</feature>
<sequence length="56" mass="6575">MMQDLINYFLSYPEVLKKLKNREACLIGFSSNETETIIKAYNDYHLSSPTTREWDG</sequence>
<keyword id="KW-0178">Competence</keyword>
<keyword id="KW-0449">Lipoprotein</keyword>
<keyword id="KW-0588">Pheromone</keyword>
<keyword id="KW-0636">Prenylation</keyword>
<keyword id="KW-0964">Secreted</keyword>
<comment type="function">
    <text evidence="1 3">Part of a major quorum-sensing system that regulates the development of genetic competence (PubMed:12067344). Acts through the activation of the two-component regulatory system ComP/ComA composed of a sensor histidine kinase, ComP, and a response regulator, ComA (By similarity).</text>
</comment>
<comment type="subunit">
    <text evidence="1">Interacts directly with the sensor histidine kinase ComP and stimulates its activity.</text>
</comment>
<comment type="subcellular location">
    <subcellularLocation>
        <location evidence="1">Secreted</location>
    </subcellularLocation>
</comment>
<comment type="PTM">
    <text evidence="1 3 4">Trp-54 is modified by farnesylation, which is essential for activity (PubMed:12067344, PubMed:18323630). Modified by the tryptophan prenyltransferase ComQ before export to the extracellular environment (By similarity). The type of isoprenyl derivative differs among the different pherotypes and depends on ComX primary sequence (PubMed:12067344).</text>
</comment>
<comment type="miscellaneous">
    <text evidence="2">The DNA sequences encoding comQ, comX and the N-terminal two-thirds of comP show a striking polymorphism, which determines the specificity of the quorum-sensing system in the different pherotypes of Bacillus. In ComX, the sole conserved residue is the modified tryptophan essential for the activity.</text>
</comment>
<dbReference type="EMBL" id="AY003904">
    <property type="protein sequence ID" value="AAF82182.1"/>
    <property type="molecule type" value="Genomic_DNA"/>
</dbReference>
<dbReference type="EMBL" id="AF456134">
    <property type="protein sequence ID" value="AAL67728.1"/>
    <property type="molecule type" value="Genomic_DNA"/>
</dbReference>
<dbReference type="SMR" id="Q9K5K3"/>
<dbReference type="GO" id="GO:0005576">
    <property type="term" value="C:extracellular region"/>
    <property type="evidence" value="ECO:0007669"/>
    <property type="project" value="UniProtKB-SubCell"/>
</dbReference>
<dbReference type="GO" id="GO:0005186">
    <property type="term" value="F:pheromone activity"/>
    <property type="evidence" value="ECO:0007669"/>
    <property type="project" value="UniProtKB-KW"/>
</dbReference>
<dbReference type="GO" id="GO:0030420">
    <property type="term" value="P:establishment of competence for transformation"/>
    <property type="evidence" value="ECO:0007669"/>
    <property type="project" value="UniProtKB-KW"/>
</dbReference>
<dbReference type="InterPro" id="IPR009233">
    <property type="entry name" value="Competence_ComX_Bacillus"/>
</dbReference>
<dbReference type="Pfam" id="PF05952">
    <property type="entry name" value="ComX"/>
    <property type="match status" value="1"/>
</dbReference>
<name>COMX2_BACMO</name>
<organism>
    <name type="scientific">Bacillus mojavensis</name>
    <dbReference type="NCBI Taxonomy" id="72360"/>
    <lineage>
        <taxon>Bacteria</taxon>
        <taxon>Bacillati</taxon>
        <taxon>Bacillota</taxon>
        <taxon>Bacilli</taxon>
        <taxon>Bacillales</taxon>
        <taxon>Bacillaceae</taxon>
        <taxon>Bacillus</taxon>
    </lineage>
</organism>
<reference key="1">
    <citation type="journal article" date="2001" name="J. Bacteriol.">
        <title>Specificity and genetic polymorphism of the Bacillus competence quorum-sensing system.</title>
        <authorList>
            <person name="Tortosa P."/>
            <person name="Logsdon L."/>
            <person name="Kraigher B."/>
            <person name="Itoh Y."/>
            <person name="Mandic-Mulec I."/>
            <person name="Dubnau D."/>
        </authorList>
    </citation>
    <scope>NUCLEOTIDE SEQUENCE [GENOMIC DNA]</scope>
    <scope>POLYMORPHISM IN COMX; COMQ AND COMP</scope>
    <source>
        <strain>RO-C-2</strain>
    </source>
</reference>
<reference key="2">
    <citation type="journal article" date="2002" name="Mol. Microbiol.">
        <title>Specific activation of the Bacillus quorum-sensing systems by isoprenylated pheromone variants.</title>
        <authorList>
            <person name="Ansaldi M."/>
            <person name="Marolt D."/>
            <person name="Stebe T."/>
            <person name="Mandic-Mulec I."/>
            <person name="Dubnau D."/>
        </authorList>
    </citation>
    <scope>NUCLEOTIDE SEQUENCE [GENOMIC DNA]</scope>
    <scope>FUNCTION</scope>
    <scope>ISOPRENYLATION AT TRP-54</scope>
    <scope>IDENTIFICATION BY MASS SPECTROMETRY</scope>
    <source>
        <strain>RO-C-2</strain>
    </source>
</reference>
<reference key="3">
    <citation type="journal article" date="2008" name="Biosci. Biotechnol. Biochem.">
        <title>Chemical structure of posttranslational modification with a farnesyl group on tryptophan.</title>
        <authorList>
            <person name="Okada M."/>
            <person name="Yamaguchi H."/>
            <person name="Sato I."/>
            <person name="Tsuji F."/>
            <person name="Dubnau D."/>
            <person name="Sakagami Y."/>
        </authorList>
    </citation>
    <scope>ISOPRENYLATION AT TRP-54</scope>
    <source>
        <strain>RO-C-2</strain>
    </source>
</reference>
<evidence type="ECO:0000250" key="1">
    <source>
        <dbReference type="UniProtKB" id="P45453"/>
    </source>
</evidence>
<evidence type="ECO:0000269" key="2">
    <source>
    </source>
</evidence>
<evidence type="ECO:0000269" key="3">
    <source>
    </source>
</evidence>
<evidence type="ECO:0000269" key="4">
    <source>
    </source>
</evidence>
<evidence type="ECO:0000303" key="5">
    <source>
    </source>
</evidence>
<evidence type="ECO:0000303" key="6">
    <source>
    </source>
</evidence>
<evidence type="ECO:0000305" key="7"/>
<evidence type="ECO:0000305" key="8">
    <source>
    </source>
</evidence>
<gene>
    <name evidence="5" type="primary">comX</name>
</gene>
<accession>Q9K5K3</accession>
<protein>
    <recommendedName>
        <fullName evidence="6">ComX pheromone</fullName>
    </recommendedName>
    <alternativeName>
        <fullName evidence="7">Competence pheromone</fullName>
    </alternativeName>
</protein>